<comment type="subcellular location">
    <subcellularLocation>
        <location evidence="1">Cell membrane</location>
        <topology evidence="1">Lipid-anchor</topology>
    </subcellularLocation>
</comment>
<comment type="similarity">
    <text evidence="3">Belongs to the UPF0098 family.</text>
</comment>
<accession>P9WFN2</accession>
<accession>L0T886</accession>
<accession>O07722</accession>
<accession>P67224</accession>
<name>LPPC_MYCTO</name>
<protein>
    <recommendedName>
        <fullName>Putative lipoprotein LppC</fullName>
    </recommendedName>
    <alternativeName>
        <fullName>UPF0098 protein MT1962</fullName>
    </alternativeName>
</protein>
<feature type="signal peptide" evidence="1">
    <location>
        <begin position="1"/>
        <end position="27"/>
    </location>
</feature>
<feature type="chain" id="PRO_0000428509" description="Putative lipoprotein LppC">
    <location>
        <begin position="28"/>
        <end position="205"/>
    </location>
</feature>
<feature type="region of interest" description="Disordered" evidence="2">
    <location>
        <begin position="126"/>
        <end position="145"/>
    </location>
</feature>
<feature type="lipid moiety-binding region" description="N-palmitoyl cysteine" evidence="1">
    <location>
        <position position="28"/>
    </location>
</feature>
<feature type="lipid moiety-binding region" description="S-diacylglycerol cysteine" evidence="1">
    <location>
        <position position="28"/>
    </location>
</feature>
<evidence type="ECO:0000255" key="1">
    <source>
        <dbReference type="PROSITE-ProRule" id="PRU00303"/>
    </source>
</evidence>
<evidence type="ECO:0000256" key="2">
    <source>
        <dbReference type="SAM" id="MobiDB-lite"/>
    </source>
</evidence>
<evidence type="ECO:0000305" key="3"/>
<dbReference type="EMBL" id="AE000516">
    <property type="protein sequence ID" value="AAK46234.1"/>
    <property type="molecule type" value="Genomic_DNA"/>
</dbReference>
<dbReference type="PIR" id="D70519">
    <property type="entry name" value="D70519"/>
</dbReference>
<dbReference type="SMR" id="P9WFN2"/>
<dbReference type="KEGG" id="mtc:MT1962"/>
<dbReference type="HOGENOM" id="CLU_083918_3_2_11"/>
<dbReference type="Proteomes" id="UP000001020">
    <property type="component" value="Chromosome"/>
</dbReference>
<dbReference type="GO" id="GO:0005886">
    <property type="term" value="C:plasma membrane"/>
    <property type="evidence" value="ECO:0007669"/>
    <property type="project" value="UniProtKB-SubCell"/>
</dbReference>
<dbReference type="CDD" id="cd00865">
    <property type="entry name" value="PEBP_bact_arch"/>
    <property type="match status" value="1"/>
</dbReference>
<dbReference type="FunFam" id="3.90.280.10:FF:000008">
    <property type="entry name" value="Probable lipoprotein lppC"/>
    <property type="match status" value="1"/>
</dbReference>
<dbReference type="Gene3D" id="3.90.280.10">
    <property type="entry name" value="PEBP-like"/>
    <property type="match status" value="1"/>
</dbReference>
<dbReference type="InterPro" id="IPR008914">
    <property type="entry name" value="PEBP"/>
</dbReference>
<dbReference type="InterPro" id="IPR036610">
    <property type="entry name" value="PEBP-like_sf"/>
</dbReference>
<dbReference type="InterPro" id="IPR005247">
    <property type="entry name" value="YbhB_YbcL/LppC-like"/>
</dbReference>
<dbReference type="NCBIfam" id="TIGR00481">
    <property type="entry name" value="YbhB/YbcL family Raf kinase inhibitor-like protein"/>
    <property type="match status" value="1"/>
</dbReference>
<dbReference type="PANTHER" id="PTHR30289:SF1">
    <property type="entry name" value="PEBP (PHOSPHATIDYLETHANOLAMINE-BINDING PROTEIN) FAMILY PROTEIN"/>
    <property type="match status" value="1"/>
</dbReference>
<dbReference type="PANTHER" id="PTHR30289">
    <property type="entry name" value="UNCHARACTERIZED PROTEIN YBCL-RELATED"/>
    <property type="match status" value="1"/>
</dbReference>
<dbReference type="Pfam" id="PF01161">
    <property type="entry name" value="PBP"/>
    <property type="match status" value="1"/>
</dbReference>
<dbReference type="SUPFAM" id="SSF49777">
    <property type="entry name" value="PEBP-like"/>
    <property type="match status" value="1"/>
</dbReference>
<keyword id="KW-1003">Cell membrane</keyword>
<keyword id="KW-0449">Lipoprotein</keyword>
<keyword id="KW-0472">Membrane</keyword>
<keyword id="KW-0564">Palmitate</keyword>
<keyword id="KW-1185">Reference proteome</keyword>
<keyword id="KW-0732">Signal</keyword>
<sequence>MESPMTSTLHRTPLATAGLALVVALGGCGGGGGDSRETPPYVPKATTVDATTPAPAAEPLTIASPMFADGAPIPVQFSCKGANVAPPLTWSSPAGAAELALVVDDPDAVGGLYVHWIVTGIAPGSGSTADGQTPAGGHSVPNSGGRQGYFGPCPPAGTGTHHYRFTLYHLPVALQLPPGATGVQAAQAIAQAASGQARLVGTFEG</sequence>
<organism>
    <name type="scientific">Mycobacterium tuberculosis (strain CDC 1551 / Oshkosh)</name>
    <dbReference type="NCBI Taxonomy" id="83331"/>
    <lineage>
        <taxon>Bacteria</taxon>
        <taxon>Bacillati</taxon>
        <taxon>Actinomycetota</taxon>
        <taxon>Actinomycetes</taxon>
        <taxon>Mycobacteriales</taxon>
        <taxon>Mycobacteriaceae</taxon>
        <taxon>Mycobacterium</taxon>
        <taxon>Mycobacterium tuberculosis complex</taxon>
    </lineage>
</organism>
<proteinExistence type="inferred from homology"/>
<gene>
    <name type="primary">lppC</name>
    <name type="ordered locus">MT1962</name>
</gene>
<reference key="1">
    <citation type="journal article" date="2002" name="J. Bacteriol.">
        <title>Whole-genome comparison of Mycobacterium tuberculosis clinical and laboratory strains.</title>
        <authorList>
            <person name="Fleischmann R.D."/>
            <person name="Alland D."/>
            <person name="Eisen J.A."/>
            <person name="Carpenter L."/>
            <person name="White O."/>
            <person name="Peterson J.D."/>
            <person name="DeBoy R.T."/>
            <person name="Dodson R.J."/>
            <person name="Gwinn M.L."/>
            <person name="Haft D.H."/>
            <person name="Hickey E.K."/>
            <person name="Kolonay J.F."/>
            <person name="Nelson W.C."/>
            <person name="Umayam L.A."/>
            <person name="Ermolaeva M.D."/>
            <person name="Salzberg S.L."/>
            <person name="Delcher A."/>
            <person name="Utterback T.R."/>
            <person name="Weidman J.F."/>
            <person name="Khouri H.M."/>
            <person name="Gill J."/>
            <person name="Mikula A."/>
            <person name="Bishai W."/>
            <person name="Jacobs W.R. Jr."/>
            <person name="Venter J.C."/>
            <person name="Fraser C.M."/>
        </authorList>
    </citation>
    <scope>NUCLEOTIDE SEQUENCE [LARGE SCALE GENOMIC DNA]</scope>
    <source>
        <strain>CDC 1551 / Oshkosh</strain>
    </source>
</reference>